<feature type="signal peptide" evidence="2">
    <location>
        <begin position="1"/>
        <end position="27"/>
    </location>
</feature>
<feature type="chain" id="PRO_5001419816" description="Fibroblast growth factor 8" evidence="2">
    <location>
        <begin position="28"/>
        <end position="210"/>
    </location>
</feature>
<feature type="sequence conflict" description="In Ref. 3; AAH86718/AAI65018." evidence="4" ref="3">
    <original>H</original>
    <variation>C</variation>
    <location>
        <position position="83"/>
    </location>
</feature>
<gene>
    <name evidence="7" type="primary">fgf8a</name>
    <name evidence="5" type="synonym">fgf-8</name>
    <name evidence="7" type="synonym">fgf8</name>
</gene>
<protein>
    <recommendedName>
        <fullName>Fibroblast growth factor 8</fullName>
        <shortName>FGF-8</shortName>
    </recommendedName>
</protein>
<reference key="1">
    <citation type="journal article" date="1997" name="Development">
        <title>A role for FGF-8 in the dorsoventral patterning of the zebrafish gastrula.</title>
        <authorList>
            <person name="Fuerthauer M."/>
            <person name="Thisse C."/>
            <person name="Thisse B."/>
        </authorList>
    </citation>
    <scope>NUCLEOTIDE SEQUENCE [MRNA]</scope>
</reference>
<reference key="2">
    <citation type="journal article" date="1998" name="Development">
        <title>Fgf8 is mutated in zebrafish acerebellar (ace) mutants and is required for maintenance of midbrain-hindbrain boundary development and somitogenesis.</title>
        <authorList>
            <person name="Reifers F."/>
            <person name="Boehli H."/>
            <person name="Walsh E.C."/>
            <person name="Crossley P.H."/>
            <person name="Stanier D.Y.R."/>
            <person name="Brand M."/>
        </authorList>
    </citation>
    <scope>NUCLEOTIDE SEQUENCE [MRNA]</scope>
</reference>
<reference key="3">
    <citation type="submission" date="2008-04" db="EMBL/GenBank/DDBJ databases">
        <authorList>
            <consortium name="NIH - Zebrafish Gene Collection (ZGC) project"/>
        </authorList>
    </citation>
    <scope>NUCLEOTIDE SEQUENCE [LARGE SCALE MRNA]</scope>
</reference>
<reference key="4">
    <citation type="submission" date="2006-04" db="EMBL/GenBank/DDBJ databases">
        <title>Genomic organization, alternative splicing, and multiple regulatory regions of the zebrafish fgf8 gene.</title>
        <authorList>
            <person name="Inoue F."/>
            <person name="Nagayoshi S."/>
            <person name="Ota S."/>
            <person name="Islam M.E."/>
            <person name="Tonou-Fujimori N."/>
            <person name="Odaira Y."/>
            <person name="Kikuta H."/>
            <person name="Kawakami K."/>
            <person name="Yamasu K."/>
        </authorList>
    </citation>
    <scope>NUCLEOTIDE SEQUENCE [GENOMIC DNA]</scope>
</reference>
<reference key="5">
    <citation type="journal article" date="2013" name="Nature">
        <title>The zebrafish reference genome sequence and its relationship to the human genome.</title>
        <authorList>
            <person name="Howe K."/>
            <person name="Clark M.D."/>
            <person name="Torroja C.F."/>
            <person name="Torrance J."/>
            <person name="Berthelot C."/>
            <person name="Muffato M."/>
            <person name="Collins J.E."/>
            <person name="Humphray S."/>
            <person name="McLaren K."/>
            <person name="Matthews L."/>
            <person name="McLaren S."/>
            <person name="Sealy I."/>
            <person name="Caccamo M."/>
            <person name="Churcher C."/>
            <person name="Scott C."/>
            <person name="Barrett J.C."/>
            <person name="Koch R."/>
            <person name="Rauch G.J."/>
            <person name="White S."/>
            <person name="Chow W."/>
            <person name="Kilian B."/>
            <person name="Quintais L.T."/>
            <person name="Guerra-Assuncao J.A."/>
            <person name="Zhou Y."/>
            <person name="Gu Y."/>
            <person name="Yen J."/>
            <person name="Vogel J.H."/>
            <person name="Eyre T."/>
            <person name="Redmond S."/>
            <person name="Banerjee R."/>
            <person name="Chi J."/>
            <person name="Fu B."/>
            <person name="Langley E."/>
            <person name="Maguire S.F."/>
            <person name="Laird G.K."/>
            <person name="Lloyd D."/>
            <person name="Kenyon E."/>
            <person name="Donaldson S."/>
            <person name="Sehra H."/>
            <person name="Almeida-King J."/>
            <person name="Loveland J."/>
            <person name="Trevanion S."/>
            <person name="Jones M."/>
            <person name="Quail M."/>
            <person name="Willey D."/>
            <person name="Hunt A."/>
            <person name="Burton J."/>
            <person name="Sims S."/>
            <person name="McLay K."/>
            <person name="Plumb B."/>
            <person name="Davis J."/>
            <person name="Clee C."/>
            <person name="Oliver K."/>
            <person name="Clark R."/>
            <person name="Riddle C."/>
            <person name="Elliot D."/>
            <person name="Threadgold G."/>
            <person name="Harden G."/>
            <person name="Ware D."/>
            <person name="Begum S."/>
            <person name="Mortimore B."/>
            <person name="Kerry G."/>
            <person name="Heath P."/>
            <person name="Phillimore B."/>
            <person name="Tracey A."/>
            <person name="Corby N."/>
            <person name="Dunn M."/>
            <person name="Johnson C."/>
            <person name="Wood J."/>
            <person name="Clark S."/>
            <person name="Pelan S."/>
            <person name="Griffiths G."/>
            <person name="Smith M."/>
            <person name="Glithero R."/>
            <person name="Howden P."/>
            <person name="Barker N."/>
            <person name="Lloyd C."/>
            <person name="Stevens C."/>
            <person name="Harley J."/>
            <person name="Holt K."/>
            <person name="Panagiotidis G."/>
            <person name="Lovell J."/>
            <person name="Beasley H."/>
            <person name="Henderson C."/>
            <person name="Gordon D."/>
            <person name="Auger K."/>
            <person name="Wright D."/>
            <person name="Collins J."/>
            <person name="Raisen C."/>
            <person name="Dyer L."/>
            <person name="Leung K."/>
            <person name="Robertson L."/>
            <person name="Ambridge K."/>
            <person name="Leongamornlert D."/>
            <person name="McGuire S."/>
            <person name="Gilderthorp R."/>
            <person name="Griffiths C."/>
            <person name="Manthravadi D."/>
            <person name="Nichol S."/>
            <person name="Barker G."/>
            <person name="Whitehead S."/>
            <person name="Kay M."/>
            <person name="Brown J."/>
            <person name="Murnane C."/>
            <person name="Gray E."/>
            <person name="Humphries M."/>
            <person name="Sycamore N."/>
            <person name="Barker D."/>
            <person name="Saunders D."/>
            <person name="Wallis J."/>
            <person name="Babbage A."/>
            <person name="Hammond S."/>
            <person name="Mashreghi-Mohammadi M."/>
            <person name="Barr L."/>
            <person name="Martin S."/>
            <person name="Wray P."/>
            <person name="Ellington A."/>
            <person name="Matthews N."/>
            <person name="Ellwood M."/>
            <person name="Woodmansey R."/>
            <person name="Clark G."/>
            <person name="Cooper J."/>
            <person name="Tromans A."/>
            <person name="Grafham D."/>
            <person name="Skuce C."/>
            <person name="Pandian R."/>
            <person name="Andrews R."/>
            <person name="Harrison E."/>
            <person name="Kimberley A."/>
            <person name="Garnett J."/>
            <person name="Fosker N."/>
            <person name="Hall R."/>
            <person name="Garner P."/>
            <person name="Kelly D."/>
            <person name="Bird C."/>
            <person name="Palmer S."/>
            <person name="Gehring I."/>
            <person name="Berger A."/>
            <person name="Dooley C.M."/>
            <person name="Ersan-Urun Z."/>
            <person name="Eser C."/>
            <person name="Geiger H."/>
            <person name="Geisler M."/>
            <person name="Karotki L."/>
            <person name="Kirn A."/>
            <person name="Konantz J."/>
            <person name="Konantz M."/>
            <person name="Oberlander M."/>
            <person name="Rudolph-Geiger S."/>
            <person name="Teucke M."/>
            <person name="Lanz C."/>
            <person name="Raddatz G."/>
            <person name="Osoegawa K."/>
            <person name="Zhu B."/>
            <person name="Rapp A."/>
            <person name="Widaa S."/>
            <person name="Langford C."/>
            <person name="Yang F."/>
            <person name="Schuster S.C."/>
            <person name="Carter N.P."/>
            <person name="Harrow J."/>
            <person name="Ning Z."/>
            <person name="Herrero J."/>
            <person name="Searle S.M."/>
            <person name="Enright A."/>
            <person name="Geisler R."/>
            <person name="Plasterk R.H."/>
            <person name="Lee C."/>
            <person name="Westerfield M."/>
            <person name="de Jong P.J."/>
            <person name="Zon L.I."/>
            <person name="Postlethwait J.H."/>
            <person name="Nusslein-Volhard C."/>
            <person name="Hubbard T.J."/>
            <person name="Roest Crollius H."/>
            <person name="Rogers J."/>
            <person name="Stemple D.L."/>
        </authorList>
    </citation>
    <scope>NUCLEOTIDE SEQUENCE [LARGE SCALE GENOMIC DNA]</scope>
    <source>
        <strain evidence="6">Tuebingen</strain>
    </source>
</reference>
<reference key="6">
    <citation type="journal article" date="2009" name="Proc. Natl. Acad. Sci. U.S.A.">
        <title>FGF-dependent left-right asymmetry patterning in zebrafish is mediated by Ier2 and Fibp1.</title>
        <authorList>
            <person name="Hong S.K."/>
            <person name="Dawid I.B."/>
        </authorList>
    </citation>
    <scope>FUNCTION</scope>
    <scope>DEVELOPMENTAL STAGE</scope>
    <scope>DISRUPTION PHENOTYPE</scope>
</reference>
<proteinExistence type="evidence at transcript level"/>
<name>FGF8A_DANRE</name>
<evidence type="ECO:0000250" key="1">
    <source>
        <dbReference type="UniProtKB" id="P55075"/>
    </source>
</evidence>
<evidence type="ECO:0000255" key="2">
    <source>
        <dbReference type="RuleBase" id="RU049442"/>
    </source>
</evidence>
<evidence type="ECO:0000269" key="3">
    <source>
    </source>
</evidence>
<evidence type="ECO:0000305" key="4"/>
<evidence type="ECO:0000312" key="5">
    <source>
        <dbReference type="EMBL" id="AAC60303.1"/>
    </source>
</evidence>
<evidence type="ECO:0000312" key="6">
    <source>
        <dbReference type="Proteomes" id="UP000000437"/>
    </source>
</evidence>
<evidence type="ECO:0000312" key="7">
    <source>
        <dbReference type="ZFIN" id="ZDB-GENE-990415-72"/>
    </source>
</evidence>
<accession>O57341</accession>
<accession>Q5PRC3</accession>
<sequence>MRLIPSRLSYLFLHLFAFCYYAQVTIQSPPNFTQHVSEQSKVTDRVSRRLIRTYQLYSRTSGKHVQVLANKKINAMAEDGDVHAKLIVETDTFGSRVRIKGAETGFYICMNRRGKLIGKKNGLGKDCIFTEIVLENNYTALQNVKYEGWYMAFTRKGRPRKGSKTRQHQREVHFMKRLPKGHQIAEHRPFDFINYPFNRRTKRTRYSGER</sequence>
<keyword id="KW-0339">Growth factor</keyword>
<keyword id="KW-1185">Reference proteome</keyword>
<keyword id="KW-0964">Secreted</keyword>
<keyword id="KW-0732">Signal</keyword>
<comment type="function">
    <text evidence="1 3">Plays an important role in the regulation of embryonic development, cell proliferation, cell differentiation and cell migration (By similarity). Required for Kupffer's vesicle ciliogenesis (PubMed:19164561).</text>
</comment>
<comment type="subunit">
    <text evidence="1">Monomer (By similarity). Homodimer (By similarity).</text>
</comment>
<comment type="subcellular location">
    <subcellularLocation>
        <location evidence="1">Secreted</location>
    </subcellularLocation>
</comment>
<comment type="developmental stage">
    <text evidence="3">Expressed in Kupffer's vesicle.</text>
</comment>
<comment type="disruption phenotype">
    <text evidence="3">Morpholino knockdown of the protein causes a dramatic loss of cilia in Kupffer's vesicle.</text>
</comment>
<comment type="similarity">
    <text evidence="2">Belongs to the heparin-binding growth factors family.</text>
</comment>
<dbReference type="EMBL" id="AF051365">
    <property type="protein sequence ID" value="AAC41302.1"/>
    <property type="molecule type" value="mRNA"/>
</dbReference>
<dbReference type="EMBL" id="AF034264">
    <property type="protein sequence ID" value="AAC60303.1"/>
    <property type="molecule type" value="mRNA"/>
</dbReference>
<dbReference type="EMBL" id="BC086718">
    <property type="protein sequence ID" value="AAH86718.1"/>
    <property type="molecule type" value="mRNA"/>
</dbReference>
<dbReference type="EMBL" id="BC165018">
    <property type="protein sequence ID" value="AAI65018.1"/>
    <property type="molecule type" value="mRNA"/>
</dbReference>
<dbReference type="EMBL" id="AB256522">
    <property type="protein sequence ID" value="BAF34588.1"/>
    <property type="molecule type" value="Genomic_DNA"/>
</dbReference>
<dbReference type="EMBL" id="CR925797">
    <property type="status" value="NOT_ANNOTATED_CDS"/>
    <property type="molecule type" value="Genomic_DNA"/>
</dbReference>
<dbReference type="RefSeq" id="NP_571356.2">
    <property type="nucleotide sequence ID" value="NM_131281.2"/>
</dbReference>
<dbReference type="SMR" id="O57341"/>
<dbReference type="FunCoup" id="O57341">
    <property type="interactions" value="558"/>
</dbReference>
<dbReference type="STRING" id="7955.ENSDARP00000018653"/>
<dbReference type="PaxDb" id="7955-ENSDARP00000018653"/>
<dbReference type="Ensembl" id="ENSDART00000025583">
    <property type="protein sequence ID" value="ENSDARP00000018653"/>
    <property type="gene ID" value="ENSDARG00000003399"/>
</dbReference>
<dbReference type="GeneID" id="30538"/>
<dbReference type="KEGG" id="dre:30538"/>
<dbReference type="AGR" id="ZFIN:ZDB-GENE-990415-72"/>
<dbReference type="CTD" id="30538"/>
<dbReference type="ZFIN" id="ZDB-GENE-990415-72">
    <property type="gene designation" value="fgf8a"/>
</dbReference>
<dbReference type="eggNOG" id="KOG3885">
    <property type="taxonomic scope" value="Eukaryota"/>
</dbReference>
<dbReference type="InParanoid" id="O57341"/>
<dbReference type="OMA" id="LFAFCHY"/>
<dbReference type="OrthoDB" id="5988014at2759"/>
<dbReference type="PhylomeDB" id="O57341"/>
<dbReference type="TreeFam" id="TF331233"/>
<dbReference type="Reactome" id="R-DRE-1257604">
    <property type="pathway name" value="PIP3 activates AKT signaling"/>
</dbReference>
<dbReference type="Reactome" id="R-DRE-190322">
    <property type="pathway name" value="FGFR4 ligand binding and activation"/>
</dbReference>
<dbReference type="Reactome" id="R-DRE-190371">
    <property type="pathway name" value="FGFR3b ligand binding and activation"/>
</dbReference>
<dbReference type="Reactome" id="R-DRE-190372">
    <property type="pathway name" value="FGFR3c ligand binding and activation"/>
</dbReference>
<dbReference type="Reactome" id="R-DRE-190373">
    <property type="pathway name" value="FGFR1c ligand binding and activation"/>
</dbReference>
<dbReference type="Reactome" id="R-DRE-190375">
    <property type="pathway name" value="FGFR2c ligand binding and activation"/>
</dbReference>
<dbReference type="Reactome" id="R-DRE-5654219">
    <property type="pathway name" value="Phospholipase C-mediated cascade: FGFR1"/>
</dbReference>
<dbReference type="Reactome" id="R-DRE-5654221">
    <property type="pathway name" value="Phospholipase C-mediated cascade, FGFR2"/>
</dbReference>
<dbReference type="Reactome" id="R-DRE-5654227">
    <property type="pathway name" value="Phospholipase C-mediated cascade, FGFR3"/>
</dbReference>
<dbReference type="Reactome" id="R-DRE-5654228">
    <property type="pathway name" value="Phospholipase C-mediated cascade, FGFR4"/>
</dbReference>
<dbReference type="Reactome" id="R-DRE-5654687">
    <property type="pathway name" value="Downstream signaling of activated FGFR1"/>
</dbReference>
<dbReference type="Reactome" id="R-DRE-5654688">
    <property type="pathway name" value="SHC-mediated cascade:FGFR1"/>
</dbReference>
<dbReference type="Reactome" id="R-DRE-5654689">
    <property type="pathway name" value="PI-3K cascade:FGFR1"/>
</dbReference>
<dbReference type="Reactome" id="R-DRE-5654693">
    <property type="pathway name" value="FRS-mediated FGFR1 signaling"/>
</dbReference>
<dbReference type="Reactome" id="R-DRE-5654699">
    <property type="pathway name" value="SHC-mediated cascade:FGFR2"/>
</dbReference>
<dbReference type="Reactome" id="R-DRE-5654700">
    <property type="pathway name" value="FRS-mediated FGFR2 signaling"/>
</dbReference>
<dbReference type="Reactome" id="R-DRE-5654704">
    <property type="pathway name" value="SHC-mediated cascade:FGFR3"/>
</dbReference>
<dbReference type="Reactome" id="R-DRE-5654706">
    <property type="pathway name" value="FRS-mediated FGFR3 signaling"/>
</dbReference>
<dbReference type="Reactome" id="R-DRE-5654712">
    <property type="pathway name" value="FRS-mediated FGFR4 signaling"/>
</dbReference>
<dbReference type="Reactome" id="R-DRE-5654726">
    <property type="pathway name" value="Negative regulation of FGFR1 signaling"/>
</dbReference>
<dbReference type="Reactome" id="R-DRE-5658623">
    <property type="pathway name" value="FGFRL1 modulation of FGFR1 signaling"/>
</dbReference>
<dbReference type="Reactome" id="R-DRE-5673001">
    <property type="pathway name" value="RAF/MAP kinase cascade"/>
</dbReference>
<dbReference type="Reactome" id="R-DRE-6811558">
    <property type="pathway name" value="PI5P, PP2A and IER3 Regulate PI3K/AKT Signaling"/>
</dbReference>
<dbReference type="SignaLink" id="O57341"/>
<dbReference type="PRO" id="PR:O57341"/>
<dbReference type="Proteomes" id="UP000000437">
    <property type="component" value="Chromosome 13"/>
</dbReference>
<dbReference type="Bgee" id="ENSDARG00000003399">
    <property type="expression patterns" value="Expressed in regional part of brain and 175 other cell types or tissues"/>
</dbReference>
<dbReference type="ExpressionAtlas" id="O57341">
    <property type="expression patterns" value="baseline and differential"/>
</dbReference>
<dbReference type="GO" id="GO:0005737">
    <property type="term" value="C:cytoplasm"/>
    <property type="evidence" value="ECO:0000318"/>
    <property type="project" value="GO_Central"/>
</dbReference>
<dbReference type="GO" id="GO:0005615">
    <property type="term" value="C:extracellular space"/>
    <property type="evidence" value="ECO:0000314"/>
    <property type="project" value="ZFIN"/>
</dbReference>
<dbReference type="GO" id="GO:0005764">
    <property type="term" value="C:lysosome"/>
    <property type="evidence" value="ECO:0000314"/>
    <property type="project" value="ZFIN"/>
</dbReference>
<dbReference type="GO" id="GO:0008083">
    <property type="term" value="F:growth factor activity"/>
    <property type="evidence" value="ECO:0000318"/>
    <property type="project" value="GO_Central"/>
</dbReference>
<dbReference type="GO" id="GO:0005105">
    <property type="term" value="F:type 1 fibroblast growth factor receptor binding"/>
    <property type="evidence" value="ECO:0000318"/>
    <property type="project" value="GO_Central"/>
</dbReference>
<dbReference type="GO" id="GO:0005111">
    <property type="term" value="F:type 2 fibroblast growth factor receptor binding"/>
    <property type="evidence" value="ECO:0000318"/>
    <property type="project" value="GO_Central"/>
</dbReference>
<dbReference type="GO" id="GO:0009887">
    <property type="term" value="P:animal organ morphogenesis"/>
    <property type="evidence" value="ECO:0000315"/>
    <property type="project" value="ZFIN"/>
</dbReference>
<dbReference type="GO" id="GO:0009952">
    <property type="term" value="P:anterior/posterior pattern specification"/>
    <property type="evidence" value="ECO:0000315"/>
    <property type="project" value="ZFIN"/>
</dbReference>
<dbReference type="GO" id="GO:0007420">
    <property type="term" value="P:brain development"/>
    <property type="evidence" value="ECO:0000315"/>
    <property type="project" value="ZFIN"/>
</dbReference>
<dbReference type="GO" id="GO:0003208">
    <property type="term" value="P:cardiac ventricle morphogenesis"/>
    <property type="evidence" value="ECO:0000315"/>
    <property type="project" value="ZFIN"/>
</dbReference>
<dbReference type="GO" id="GO:0010002">
    <property type="term" value="P:cardioblast differentiation"/>
    <property type="evidence" value="ECO:0000315"/>
    <property type="project" value="ZFIN"/>
</dbReference>
<dbReference type="GO" id="GO:0051216">
    <property type="term" value="P:cartilage development"/>
    <property type="evidence" value="ECO:0000315"/>
    <property type="project" value="ZFIN"/>
</dbReference>
<dbReference type="GO" id="GO:0001708">
    <property type="term" value="P:cell fate specification"/>
    <property type="evidence" value="ECO:0000315"/>
    <property type="project" value="ZFIN"/>
</dbReference>
<dbReference type="GO" id="GO:0021549">
    <property type="term" value="P:cerebellum development"/>
    <property type="evidence" value="ECO:0000315"/>
    <property type="project" value="ZFIN"/>
</dbReference>
<dbReference type="GO" id="GO:0021588">
    <property type="term" value="P:cerebellum formation"/>
    <property type="evidence" value="ECO:0000315"/>
    <property type="project" value="ZFIN"/>
</dbReference>
<dbReference type="GO" id="GO:0060271">
    <property type="term" value="P:cilium assembly"/>
    <property type="evidence" value="ECO:0000315"/>
    <property type="project" value="ZFIN"/>
</dbReference>
<dbReference type="GO" id="GO:0061386">
    <property type="term" value="P:closure of optic fissure"/>
    <property type="evidence" value="ECO:0000316"/>
    <property type="project" value="ZFIN"/>
</dbReference>
<dbReference type="GO" id="GO:0048263">
    <property type="term" value="P:determination of dorsal identity"/>
    <property type="evidence" value="ECO:0000314"/>
    <property type="project" value="ZFIN"/>
</dbReference>
<dbReference type="GO" id="GO:0007368">
    <property type="term" value="P:determination of left/right symmetry"/>
    <property type="evidence" value="ECO:0000315"/>
    <property type="project" value="ZFIN"/>
</dbReference>
<dbReference type="GO" id="GO:0009953">
    <property type="term" value="P:dorsal/ventral pattern formation"/>
    <property type="evidence" value="ECO:0000314"/>
    <property type="project" value="ZFIN"/>
</dbReference>
<dbReference type="GO" id="GO:0060788">
    <property type="term" value="P:ectodermal placode formation"/>
    <property type="evidence" value="ECO:0000315"/>
    <property type="project" value="ZFIN"/>
</dbReference>
<dbReference type="GO" id="GO:0031076">
    <property type="term" value="P:embryonic camera-type eye development"/>
    <property type="evidence" value="ECO:0000315"/>
    <property type="project" value="ZFIN"/>
</dbReference>
<dbReference type="GO" id="GO:0035050">
    <property type="term" value="P:embryonic heart tube development"/>
    <property type="evidence" value="ECO:0000316"/>
    <property type="project" value="ZFIN"/>
</dbReference>
<dbReference type="GO" id="GO:0048702">
    <property type="term" value="P:embryonic neurocranium morphogenesis"/>
    <property type="evidence" value="ECO:0000316"/>
    <property type="project" value="ZFIN"/>
</dbReference>
<dbReference type="GO" id="GO:0009880">
    <property type="term" value="P:embryonic pattern specification"/>
    <property type="evidence" value="ECO:0000316"/>
    <property type="project" value="ZFIN"/>
</dbReference>
<dbReference type="GO" id="GO:0060059">
    <property type="term" value="P:embryonic retina morphogenesis in camera-type eye"/>
    <property type="evidence" value="ECO:0000316"/>
    <property type="project" value="ZFIN"/>
</dbReference>
<dbReference type="GO" id="GO:0007492">
    <property type="term" value="P:endoderm development"/>
    <property type="evidence" value="ECO:0000314"/>
    <property type="project" value="ZFIN"/>
</dbReference>
<dbReference type="GO" id="GO:0008543">
    <property type="term" value="P:fibroblast growth factor receptor signaling pathway"/>
    <property type="evidence" value="ECO:0000318"/>
    <property type="project" value="GO_Central"/>
</dbReference>
<dbReference type="GO" id="GO:0003007">
    <property type="term" value="P:heart morphogenesis"/>
    <property type="evidence" value="ECO:0000315"/>
    <property type="project" value="ZFIN"/>
</dbReference>
<dbReference type="GO" id="GO:0030902">
    <property type="term" value="P:hindbrain development"/>
    <property type="evidence" value="ECO:0000315"/>
    <property type="project" value="ZFIN"/>
</dbReference>
<dbReference type="GO" id="GO:0048839">
    <property type="term" value="P:inner ear development"/>
    <property type="evidence" value="ECO:0000315"/>
    <property type="project" value="ZFIN"/>
</dbReference>
<dbReference type="GO" id="GO:0070121">
    <property type="term" value="P:Kupffer's vesicle development"/>
    <property type="evidence" value="ECO:0000315"/>
    <property type="project" value="ZFIN"/>
</dbReference>
<dbReference type="GO" id="GO:0021703">
    <property type="term" value="P:locus ceruleus development"/>
    <property type="evidence" value="ECO:0000315"/>
    <property type="project" value="ZFIN"/>
</dbReference>
<dbReference type="GO" id="GO:0007498">
    <property type="term" value="P:mesoderm development"/>
    <property type="evidence" value="ECO:0000316"/>
    <property type="project" value="ZFIN"/>
</dbReference>
<dbReference type="GO" id="GO:0030901">
    <property type="term" value="P:midbrain development"/>
    <property type="evidence" value="ECO:0000315"/>
    <property type="project" value="ZFIN"/>
</dbReference>
<dbReference type="GO" id="GO:0030917">
    <property type="term" value="P:midbrain-hindbrain boundary development"/>
    <property type="evidence" value="ECO:0000315"/>
    <property type="project" value="ZFIN"/>
</dbReference>
<dbReference type="GO" id="GO:0021555">
    <property type="term" value="P:midbrain-hindbrain boundary morphogenesis"/>
    <property type="evidence" value="ECO:0000316"/>
    <property type="project" value="ZFIN"/>
</dbReference>
<dbReference type="GO" id="GO:0042664">
    <property type="term" value="P:negative regulation of endodermal cell fate specification"/>
    <property type="evidence" value="ECO:0000314"/>
    <property type="project" value="ZFIN"/>
</dbReference>
<dbReference type="GO" id="GO:0022008">
    <property type="term" value="P:neurogenesis"/>
    <property type="evidence" value="ECO:0000318"/>
    <property type="project" value="GO_Central"/>
</dbReference>
<dbReference type="GO" id="GO:0030182">
    <property type="term" value="P:neuron differentiation"/>
    <property type="evidence" value="ECO:0000315"/>
    <property type="project" value="ZFIN"/>
</dbReference>
<dbReference type="GO" id="GO:0048665">
    <property type="term" value="P:neuron fate specification"/>
    <property type="evidence" value="ECO:0000316"/>
    <property type="project" value="ZFIN"/>
</dbReference>
<dbReference type="GO" id="GO:0030903">
    <property type="term" value="P:notochord development"/>
    <property type="evidence" value="ECO:0000316"/>
    <property type="project" value="ZFIN"/>
</dbReference>
<dbReference type="GO" id="GO:0048709">
    <property type="term" value="P:oligodendrocyte differentiation"/>
    <property type="evidence" value="ECO:0000316"/>
    <property type="project" value="ZFIN"/>
</dbReference>
<dbReference type="GO" id="GO:0043049">
    <property type="term" value="P:otic placode formation"/>
    <property type="evidence" value="ECO:0000315"/>
    <property type="project" value="ZFIN"/>
</dbReference>
<dbReference type="GO" id="GO:0071599">
    <property type="term" value="P:otic vesicle development"/>
    <property type="evidence" value="ECO:0000316"/>
    <property type="project" value="ZFIN"/>
</dbReference>
<dbReference type="GO" id="GO:0030916">
    <property type="term" value="P:otic vesicle formation"/>
    <property type="evidence" value="ECO:0000314"/>
    <property type="project" value="ZFIN"/>
</dbReference>
<dbReference type="GO" id="GO:0048339">
    <property type="term" value="P:paraxial mesoderm development"/>
    <property type="evidence" value="ECO:0000316"/>
    <property type="project" value="ZFIN"/>
</dbReference>
<dbReference type="GO" id="GO:0007422">
    <property type="term" value="P:peripheral nervous system development"/>
    <property type="evidence" value="ECO:0000316"/>
    <property type="project" value="ZFIN"/>
</dbReference>
<dbReference type="GO" id="GO:0060037">
    <property type="term" value="P:pharyngeal system development"/>
    <property type="evidence" value="ECO:0000316"/>
    <property type="project" value="ZFIN"/>
</dbReference>
<dbReference type="GO" id="GO:0030335">
    <property type="term" value="P:positive regulation of cell migration"/>
    <property type="evidence" value="ECO:0000316"/>
    <property type="project" value="ZFIN"/>
</dbReference>
<dbReference type="GO" id="GO:0008284">
    <property type="term" value="P:positive regulation of cell population proliferation"/>
    <property type="evidence" value="ECO:0000318"/>
    <property type="project" value="GO_Central"/>
</dbReference>
<dbReference type="GO" id="GO:0043410">
    <property type="term" value="P:positive regulation of MAPK cascade"/>
    <property type="evidence" value="ECO:0000318"/>
    <property type="project" value="GO_Central"/>
</dbReference>
<dbReference type="GO" id="GO:0014709">
    <property type="term" value="P:positive regulation of somitomeric trunk muscle development"/>
    <property type="evidence" value="ECO:0000315"/>
    <property type="project" value="BHF-UCL"/>
</dbReference>
<dbReference type="GO" id="GO:0030177">
    <property type="term" value="P:positive regulation of Wnt signaling pathway"/>
    <property type="evidence" value="ECO:0000316"/>
    <property type="project" value="ZFIN"/>
</dbReference>
<dbReference type="GO" id="GO:0046850">
    <property type="term" value="P:regulation of bone remodeling"/>
    <property type="evidence" value="ECO:0000315"/>
    <property type="project" value="ZFIN"/>
</dbReference>
<dbReference type="GO" id="GO:0030334">
    <property type="term" value="P:regulation of cell migration"/>
    <property type="evidence" value="ECO:0000318"/>
    <property type="project" value="GO_Central"/>
</dbReference>
<dbReference type="GO" id="GO:0060041">
    <property type="term" value="P:retina development in camera-type eye"/>
    <property type="evidence" value="ECO:0000316"/>
    <property type="project" value="ZFIN"/>
</dbReference>
<dbReference type="GO" id="GO:0021571">
    <property type="term" value="P:rhombomere 5 development"/>
    <property type="evidence" value="ECO:0000316"/>
    <property type="project" value="ZFIN"/>
</dbReference>
<dbReference type="GO" id="GO:0021572">
    <property type="term" value="P:rhombomere 6 development"/>
    <property type="evidence" value="ECO:0000316"/>
    <property type="project" value="ZFIN"/>
</dbReference>
<dbReference type="GO" id="GO:0048705">
    <property type="term" value="P:skeletal system morphogenesis"/>
    <property type="evidence" value="ECO:0000315"/>
    <property type="project" value="ZFIN"/>
</dbReference>
<dbReference type="GO" id="GO:0061053">
    <property type="term" value="P:somite development"/>
    <property type="evidence" value="ECO:0000315"/>
    <property type="project" value="ZFIN"/>
</dbReference>
<dbReference type="GO" id="GO:0001756">
    <property type="term" value="P:somitogenesis"/>
    <property type="evidence" value="ECO:0000316"/>
    <property type="project" value="ZFIN"/>
</dbReference>
<dbReference type="GO" id="GO:0051146">
    <property type="term" value="P:striated muscle cell differentiation"/>
    <property type="evidence" value="ECO:0000315"/>
    <property type="project" value="ZFIN"/>
</dbReference>
<dbReference type="GO" id="GO:0061195">
    <property type="term" value="P:taste bud formation"/>
    <property type="evidence" value="ECO:0000315"/>
    <property type="project" value="ZFIN"/>
</dbReference>
<dbReference type="GO" id="GO:0030878">
    <property type="term" value="P:thyroid gland development"/>
    <property type="evidence" value="ECO:0000315"/>
    <property type="project" value="ZFIN"/>
</dbReference>
<dbReference type="GO" id="GO:0055012">
    <property type="term" value="P:ventricular cardiac muscle cell differentiation"/>
    <property type="evidence" value="ECO:0000315"/>
    <property type="project" value="ZFIN"/>
</dbReference>
<dbReference type="CDD" id="cd23322">
    <property type="entry name" value="beta-trefoil_FGF8"/>
    <property type="match status" value="1"/>
</dbReference>
<dbReference type="FunFam" id="2.80.10.50:FF:000007">
    <property type="entry name" value="Fibroblast growth factor"/>
    <property type="match status" value="1"/>
</dbReference>
<dbReference type="Gene3D" id="2.80.10.50">
    <property type="match status" value="1"/>
</dbReference>
<dbReference type="InterPro" id="IPR002209">
    <property type="entry name" value="Fibroblast_GF_fam"/>
</dbReference>
<dbReference type="InterPro" id="IPR008996">
    <property type="entry name" value="IL1/FGF"/>
</dbReference>
<dbReference type="PANTHER" id="PTHR11486">
    <property type="entry name" value="FIBROBLAST GROWTH FACTOR"/>
    <property type="match status" value="1"/>
</dbReference>
<dbReference type="Pfam" id="PF00167">
    <property type="entry name" value="FGF"/>
    <property type="match status" value="1"/>
</dbReference>
<dbReference type="PRINTS" id="PR00262">
    <property type="entry name" value="IL1HBGF"/>
</dbReference>
<dbReference type="SMART" id="SM00442">
    <property type="entry name" value="FGF"/>
    <property type="match status" value="1"/>
</dbReference>
<dbReference type="SUPFAM" id="SSF50353">
    <property type="entry name" value="Cytokine"/>
    <property type="match status" value="1"/>
</dbReference>
<dbReference type="PROSITE" id="PS00247">
    <property type="entry name" value="HBGF_FGF"/>
    <property type="match status" value="1"/>
</dbReference>
<organism>
    <name type="scientific">Danio rerio</name>
    <name type="common">Zebrafish</name>
    <name type="synonym">Brachydanio rerio</name>
    <dbReference type="NCBI Taxonomy" id="7955"/>
    <lineage>
        <taxon>Eukaryota</taxon>
        <taxon>Metazoa</taxon>
        <taxon>Chordata</taxon>
        <taxon>Craniata</taxon>
        <taxon>Vertebrata</taxon>
        <taxon>Euteleostomi</taxon>
        <taxon>Actinopterygii</taxon>
        <taxon>Neopterygii</taxon>
        <taxon>Teleostei</taxon>
        <taxon>Ostariophysi</taxon>
        <taxon>Cypriniformes</taxon>
        <taxon>Danionidae</taxon>
        <taxon>Danioninae</taxon>
        <taxon>Danio</taxon>
    </lineage>
</organism>